<protein>
    <recommendedName>
        <fullName>Stephenin-3</fullName>
    </recommendedName>
</protein>
<proteinExistence type="inferred from homology"/>
<feature type="signal peptide" evidence="2">
    <location>
        <begin position="1"/>
        <end position="24"/>
    </location>
</feature>
<feature type="chain" id="PRO_5000395654" description="Stephenin-3">
    <location>
        <begin position="25"/>
        <end position="83"/>
    </location>
</feature>
<feature type="domain" description="BPTI/Kunitz inhibitor" evidence="3">
    <location>
        <begin position="31"/>
        <end position="80"/>
    </location>
</feature>
<feature type="disulfide bond" evidence="3">
    <location>
        <begin position="31"/>
        <end position="80"/>
    </location>
</feature>
<feature type="disulfide bond" evidence="3">
    <location>
        <begin position="40"/>
        <end position="63"/>
    </location>
</feature>
<feature type="disulfide bond" evidence="3">
    <location>
        <begin position="55"/>
        <end position="76"/>
    </location>
</feature>
<organism>
    <name type="scientific">Hoplocephalus stephensii</name>
    <name type="common">Stephens's banded snake</name>
    <dbReference type="NCBI Taxonomy" id="196418"/>
    <lineage>
        <taxon>Eukaryota</taxon>
        <taxon>Metazoa</taxon>
        <taxon>Chordata</taxon>
        <taxon>Craniata</taxon>
        <taxon>Vertebrata</taxon>
        <taxon>Euteleostomi</taxon>
        <taxon>Lepidosauria</taxon>
        <taxon>Squamata</taxon>
        <taxon>Bifurcata</taxon>
        <taxon>Unidentata</taxon>
        <taxon>Episquamata</taxon>
        <taxon>Toxicofera</taxon>
        <taxon>Serpentes</taxon>
        <taxon>Colubroidea</taxon>
        <taxon>Elapidae</taxon>
        <taxon>Notechinae</taxon>
        <taxon>Hoplocephalus</taxon>
    </lineage>
</organism>
<evidence type="ECO:0000250" key="1"/>
<evidence type="ECO:0000255" key="2"/>
<evidence type="ECO:0000255" key="3">
    <source>
        <dbReference type="PROSITE-ProRule" id="PRU00031"/>
    </source>
</evidence>
<evidence type="ECO:0000305" key="4"/>
<name>IVBI3_HOPST</name>
<dbReference type="EMBL" id="EU401854">
    <property type="protein sequence ID" value="ACC77803.1"/>
    <property type="status" value="ALT_FRAME"/>
    <property type="molecule type" value="Genomic_DNA"/>
</dbReference>
<dbReference type="SMR" id="B5L5R6"/>
<dbReference type="GO" id="GO:0005615">
    <property type="term" value="C:extracellular space"/>
    <property type="evidence" value="ECO:0007669"/>
    <property type="project" value="TreeGrafter"/>
</dbReference>
<dbReference type="GO" id="GO:0004867">
    <property type="term" value="F:serine-type endopeptidase inhibitor activity"/>
    <property type="evidence" value="ECO:0007669"/>
    <property type="project" value="UniProtKB-KW"/>
</dbReference>
<dbReference type="CDD" id="cd22594">
    <property type="entry name" value="Kunitz_textilinin-like"/>
    <property type="match status" value="1"/>
</dbReference>
<dbReference type="Gene3D" id="4.10.410.10">
    <property type="entry name" value="Pancreatic trypsin inhibitor Kunitz domain"/>
    <property type="match status" value="1"/>
</dbReference>
<dbReference type="InterPro" id="IPR002223">
    <property type="entry name" value="Kunitz_BPTI"/>
</dbReference>
<dbReference type="InterPro" id="IPR036880">
    <property type="entry name" value="Kunitz_BPTI_sf"/>
</dbReference>
<dbReference type="InterPro" id="IPR020901">
    <property type="entry name" value="Prtase_inh_Kunz-CS"/>
</dbReference>
<dbReference type="InterPro" id="IPR050098">
    <property type="entry name" value="TFPI/VKTCI-like"/>
</dbReference>
<dbReference type="PANTHER" id="PTHR10083:SF374">
    <property type="entry name" value="BPTI_KUNITZ INHIBITOR DOMAIN-CONTAINING PROTEIN"/>
    <property type="match status" value="1"/>
</dbReference>
<dbReference type="PANTHER" id="PTHR10083">
    <property type="entry name" value="KUNITZ-TYPE PROTEASE INHIBITOR-RELATED"/>
    <property type="match status" value="1"/>
</dbReference>
<dbReference type="Pfam" id="PF00014">
    <property type="entry name" value="Kunitz_BPTI"/>
    <property type="match status" value="1"/>
</dbReference>
<dbReference type="PRINTS" id="PR00759">
    <property type="entry name" value="BASICPTASE"/>
</dbReference>
<dbReference type="SMART" id="SM00131">
    <property type="entry name" value="KU"/>
    <property type="match status" value="1"/>
</dbReference>
<dbReference type="SUPFAM" id="SSF57362">
    <property type="entry name" value="BPTI-like"/>
    <property type="match status" value="1"/>
</dbReference>
<dbReference type="PROSITE" id="PS00280">
    <property type="entry name" value="BPTI_KUNITZ_1"/>
    <property type="match status" value="1"/>
</dbReference>
<dbReference type="PROSITE" id="PS50279">
    <property type="entry name" value="BPTI_KUNITZ_2"/>
    <property type="match status" value="1"/>
</dbReference>
<comment type="function">
    <text evidence="4">Serine protease inhibitor.</text>
</comment>
<comment type="subcellular location">
    <subcellularLocation>
        <location evidence="1">Secreted</location>
    </subcellularLocation>
</comment>
<comment type="sequence caution" evidence="4">
    <conflict type="frameshift">
        <sequence resource="EMBL-CDS" id="ACC77803"/>
    </conflict>
</comment>
<accession>B5L5R6</accession>
<keyword id="KW-1015">Disulfide bond</keyword>
<keyword id="KW-0646">Protease inhibitor</keyword>
<keyword id="KW-0964">Secreted</keyword>
<keyword id="KW-0722">Serine protease inhibitor</keyword>
<keyword id="KW-0732">Signal</keyword>
<reference key="1">
    <citation type="journal article" date="2008" name="Cell. Mol. Life Sci.">
        <title>Common evolution of waprin and Kunitz-like toxin families in Australian venomous snakes.</title>
        <authorList>
            <person name="St Pierre L."/>
            <person name="Earl S.T."/>
            <person name="Filippovich I."/>
            <person name="Sorokina N."/>
            <person name="Masci P.P."/>
            <person name="De Jersey J."/>
            <person name="Lavin M.F."/>
        </authorList>
    </citation>
    <scope>NUCLEOTIDE SEQUENCE [GENOMIC DNA]</scope>
    <source>
        <tissue>Venom gland</tissue>
    </source>
</reference>
<sequence>MSSGGLLLLLGLLTLWEVLTPVSSKDRPEFCELPADPGPCNALSQAYYNAVQHKCLKFRYGGCKANPNTFKTIEECKRTCAGK</sequence>